<comment type="function">
    <text evidence="1">Involved in the biosynthesis of the osmoprotectant glycine betaine. Catalyzes the irreversible oxidation of betaine aldehyde to the corresponding acid.</text>
</comment>
<comment type="catalytic activity">
    <reaction evidence="1">
        <text>betaine aldehyde + NAD(+) + H2O = glycine betaine + NADH + 2 H(+)</text>
        <dbReference type="Rhea" id="RHEA:15305"/>
        <dbReference type="ChEBI" id="CHEBI:15377"/>
        <dbReference type="ChEBI" id="CHEBI:15378"/>
        <dbReference type="ChEBI" id="CHEBI:15710"/>
        <dbReference type="ChEBI" id="CHEBI:17750"/>
        <dbReference type="ChEBI" id="CHEBI:57540"/>
        <dbReference type="ChEBI" id="CHEBI:57945"/>
        <dbReference type="EC" id="1.2.1.8"/>
    </reaction>
    <physiologicalReaction direction="left-to-right" evidence="1">
        <dbReference type="Rhea" id="RHEA:15306"/>
    </physiologicalReaction>
</comment>
<comment type="cofactor">
    <cofactor evidence="1">
        <name>K(+)</name>
        <dbReference type="ChEBI" id="CHEBI:29103"/>
    </cofactor>
    <text evidence="1">Binds 2 potassium ions per subunit.</text>
</comment>
<comment type="pathway">
    <text evidence="1">Amine and polyamine biosynthesis; betaine biosynthesis via choline pathway; betaine from betaine aldehyde: step 1/1.</text>
</comment>
<comment type="subunit">
    <text evidence="1">Dimer of dimers.</text>
</comment>
<comment type="similarity">
    <text evidence="1">Belongs to the aldehyde dehydrogenase family.</text>
</comment>
<evidence type="ECO:0000255" key="1">
    <source>
        <dbReference type="HAMAP-Rule" id="MF_00804"/>
    </source>
</evidence>
<accession>Q3J4E9</accession>
<name>BETB_CERS4</name>
<proteinExistence type="inferred from homology"/>
<sequence>MRAQPAASHFVDGRPLEDETGAPIPVIYPATGEEIARLHEATPAVIEAALASGARAQAAWAAMRPVERARILRRASDLIRAHNEELSLLETLDTGKPLQETLVADWASGADALEFFAGLAPVVTGETVPLGQDFVYTIREPLGLCVGIGAWNYPSQIACWKAAPALALGNAMVFKPSEVTPLGALKLAEILIEAGLPPGLFNVVQGRGAVGASLVTDSRVAKVSLTGSVPTGRRVYAAAAEGVRHVTMELGGKSPLIVFDDADLESAIGAAMLGNFYSAGQICSNGTRVFVQKGIKEAFLARLAERADAIRMGDPLDPEVQMGPLVSQAQLEKVLAYIEKARAEGGRLVCGGEASVSPGCYVQPTVFADVTDAMTLAREEVFGPVMAVLDFETEEEAIARANATDFGLAAGVFTADLTRAHRVVAQLQAGTCWINAYNLTPVEAPFGGVKLSGVGRENGRAAVQHYTQVKSVYVGMGPVDAPY</sequence>
<reference key="1">
    <citation type="submission" date="2005-09" db="EMBL/GenBank/DDBJ databases">
        <title>Complete sequence of chromosome 1 of Rhodobacter sphaeroides 2.4.1.</title>
        <authorList>
            <person name="Copeland A."/>
            <person name="Lucas S."/>
            <person name="Lapidus A."/>
            <person name="Barry K."/>
            <person name="Detter J.C."/>
            <person name="Glavina T."/>
            <person name="Hammon N."/>
            <person name="Israni S."/>
            <person name="Pitluck S."/>
            <person name="Richardson P."/>
            <person name="Mackenzie C."/>
            <person name="Choudhary M."/>
            <person name="Larimer F."/>
            <person name="Hauser L.J."/>
            <person name="Land M."/>
            <person name="Donohue T.J."/>
            <person name="Kaplan S."/>
        </authorList>
    </citation>
    <scope>NUCLEOTIDE SEQUENCE [LARGE SCALE GENOMIC DNA]</scope>
    <source>
        <strain>ATCC 17023 / DSM 158 / JCM 6121 / CCUG 31486 / LMG 2827 / NBRC 12203 / NCIMB 8253 / ATH 2.4.1.</strain>
    </source>
</reference>
<gene>
    <name evidence="1" type="primary">betB</name>
    <name type="ordered locus">RHOS4_07670</name>
    <name type="ORF">RSP_2183</name>
</gene>
<keyword id="KW-0479">Metal-binding</keyword>
<keyword id="KW-0520">NAD</keyword>
<keyword id="KW-0521">NADP</keyword>
<keyword id="KW-0558">Oxidation</keyword>
<keyword id="KW-0560">Oxidoreductase</keyword>
<keyword id="KW-0630">Potassium</keyword>
<keyword id="KW-1185">Reference proteome</keyword>
<protein>
    <recommendedName>
        <fullName evidence="1">Betaine aldehyde dehydrogenase</fullName>
        <shortName evidence="1">BADH</shortName>
        <ecNumber evidence="1">1.2.1.8</ecNumber>
    </recommendedName>
</protein>
<feature type="chain" id="PRO_1000047055" description="Betaine aldehyde dehydrogenase">
    <location>
        <begin position="1"/>
        <end position="483"/>
    </location>
</feature>
<feature type="active site" description="Charge relay system" evidence="1">
    <location>
        <position position="161"/>
    </location>
</feature>
<feature type="active site" description="Proton acceptor" evidence="1">
    <location>
        <position position="249"/>
    </location>
</feature>
<feature type="active site" description="Nucleophile" evidence="1">
    <location>
        <position position="283"/>
    </location>
</feature>
<feature type="active site" description="Charge relay system" evidence="1">
    <location>
        <position position="457"/>
    </location>
</feature>
<feature type="binding site" evidence="1">
    <location>
        <position position="27"/>
    </location>
    <ligand>
        <name>K(+)</name>
        <dbReference type="ChEBI" id="CHEBI:29103"/>
        <label>1</label>
    </ligand>
</feature>
<feature type="binding site" evidence="1">
    <location>
        <position position="93"/>
    </location>
    <ligand>
        <name>K(+)</name>
        <dbReference type="ChEBI" id="CHEBI:29103"/>
        <label>1</label>
    </ligand>
</feature>
<feature type="binding site" evidence="1">
    <location>
        <begin position="149"/>
        <end position="151"/>
    </location>
    <ligand>
        <name>NAD(+)</name>
        <dbReference type="ChEBI" id="CHEBI:57540"/>
    </ligand>
</feature>
<feature type="binding site" evidence="1">
    <location>
        <begin position="175"/>
        <end position="178"/>
    </location>
    <ligand>
        <name>NAD(+)</name>
        <dbReference type="ChEBI" id="CHEBI:57540"/>
    </ligand>
</feature>
<feature type="binding site" evidence="1">
    <location>
        <position position="179"/>
    </location>
    <ligand>
        <name>K(+)</name>
        <dbReference type="ChEBI" id="CHEBI:29103"/>
        <label>1</label>
    </ligand>
</feature>
<feature type="binding site" evidence="1">
    <location>
        <begin position="228"/>
        <end position="231"/>
    </location>
    <ligand>
        <name>NAD(+)</name>
        <dbReference type="ChEBI" id="CHEBI:57540"/>
    </ligand>
</feature>
<feature type="binding site" evidence="1">
    <location>
        <position position="243"/>
    </location>
    <ligand>
        <name>K(+)</name>
        <dbReference type="ChEBI" id="CHEBI:29103"/>
        <label>2</label>
    </ligand>
</feature>
<feature type="binding site" evidence="1">
    <location>
        <position position="251"/>
    </location>
    <ligand>
        <name>NAD(+)</name>
        <dbReference type="ChEBI" id="CHEBI:57540"/>
    </ligand>
</feature>
<feature type="binding site" description="covalent" evidence="1">
    <location>
        <position position="283"/>
    </location>
    <ligand>
        <name>NAD(+)</name>
        <dbReference type="ChEBI" id="CHEBI:57540"/>
    </ligand>
</feature>
<feature type="binding site" evidence="1">
    <location>
        <position position="380"/>
    </location>
    <ligand>
        <name>NAD(+)</name>
        <dbReference type="ChEBI" id="CHEBI:57540"/>
    </ligand>
</feature>
<feature type="binding site" evidence="1">
    <location>
        <position position="450"/>
    </location>
    <ligand>
        <name>K(+)</name>
        <dbReference type="ChEBI" id="CHEBI:29103"/>
        <label>2</label>
    </ligand>
</feature>
<feature type="binding site" evidence="1">
    <location>
        <position position="453"/>
    </location>
    <ligand>
        <name>K(+)</name>
        <dbReference type="ChEBI" id="CHEBI:29103"/>
        <label>2</label>
    </ligand>
</feature>
<feature type="modified residue" description="Cysteine sulfenic acid (-SOH)" evidence="1">
    <location>
        <position position="283"/>
    </location>
</feature>
<organism>
    <name type="scientific">Cereibacter sphaeroides (strain ATCC 17023 / DSM 158 / JCM 6121 / CCUG 31486 / LMG 2827 / NBRC 12203 / NCIMB 8253 / ATH 2.4.1.)</name>
    <name type="common">Rhodobacter sphaeroides</name>
    <dbReference type="NCBI Taxonomy" id="272943"/>
    <lineage>
        <taxon>Bacteria</taxon>
        <taxon>Pseudomonadati</taxon>
        <taxon>Pseudomonadota</taxon>
        <taxon>Alphaproteobacteria</taxon>
        <taxon>Rhodobacterales</taxon>
        <taxon>Paracoccaceae</taxon>
        <taxon>Cereibacter</taxon>
    </lineage>
</organism>
<dbReference type="EC" id="1.2.1.8" evidence="1"/>
<dbReference type="EMBL" id="CP000143">
    <property type="protein sequence ID" value="ABA78335.1"/>
    <property type="molecule type" value="Genomic_DNA"/>
</dbReference>
<dbReference type="RefSeq" id="WP_011337293.1">
    <property type="nucleotide sequence ID" value="NC_007493.2"/>
</dbReference>
<dbReference type="RefSeq" id="YP_352236.1">
    <property type="nucleotide sequence ID" value="NC_007493.2"/>
</dbReference>
<dbReference type="SMR" id="Q3J4E9"/>
<dbReference type="STRING" id="272943.RSP_2183"/>
<dbReference type="EnsemblBacteria" id="ABA78335">
    <property type="protein sequence ID" value="ABA78335"/>
    <property type="gene ID" value="RSP_2183"/>
</dbReference>
<dbReference type="GeneID" id="3719653"/>
<dbReference type="KEGG" id="rsp:RSP_2183"/>
<dbReference type="PATRIC" id="fig|272943.9.peg.1079"/>
<dbReference type="eggNOG" id="COG1012">
    <property type="taxonomic scope" value="Bacteria"/>
</dbReference>
<dbReference type="OrthoDB" id="9812625at2"/>
<dbReference type="PhylomeDB" id="Q3J4E9"/>
<dbReference type="UniPathway" id="UPA00529">
    <property type="reaction ID" value="UER00386"/>
</dbReference>
<dbReference type="Proteomes" id="UP000002703">
    <property type="component" value="Chromosome 1"/>
</dbReference>
<dbReference type="GO" id="GO:0008802">
    <property type="term" value="F:betaine-aldehyde dehydrogenase (NAD+) activity"/>
    <property type="evidence" value="ECO:0007669"/>
    <property type="project" value="UniProtKB-UniRule"/>
</dbReference>
<dbReference type="GO" id="GO:0046872">
    <property type="term" value="F:metal ion binding"/>
    <property type="evidence" value="ECO:0007669"/>
    <property type="project" value="UniProtKB-KW"/>
</dbReference>
<dbReference type="GO" id="GO:0019285">
    <property type="term" value="P:glycine betaine biosynthetic process from choline"/>
    <property type="evidence" value="ECO:0007669"/>
    <property type="project" value="UniProtKB-UniRule"/>
</dbReference>
<dbReference type="FunFam" id="3.40.309.10:FF:000012">
    <property type="entry name" value="Betaine aldehyde dehydrogenase"/>
    <property type="match status" value="1"/>
</dbReference>
<dbReference type="FunFam" id="3.40.605.10:FF:000007">
    <property type="entry name" value="NAD/NADP-dependent betaine aldehyde dehydrogenase"/>
    <property type="match status" value="1"/>
</dbReference>
<dbReference type="Gene3D" id="3.40.605.10">
    <property type="entry name" value="Aldehyde Dehydrogenase, Chain A, domain 1"/>
    <property type="match status" value="1"/>
</dbReference>
<dbReference type="Gene3D" id="3.40.309.10">
    <property type="entry name" value="Aldehyde Dehydrogenase, Chain A, domain 2"/>
    <property type="match status" value="1"/>
</dbReference>
<dbReference type="HAMAP" id="MF_00804">
    <property type="entry name" value="BADH"/>
    <property type="match status" value="1"/>
</dbReference>
<dbReference type="InterPro" id="IPR016161">
    <property type="entry name" value="Ald_DH/histidinol_DH"/>
</dbReference>
<dbReference type="InterPro" id="IPR016163">
    <property type="entry name" value="Ald_DH_C"/>
</dbReference>
<dbReference type="InterPro" id="IPR016160">
    <property type="entry name" value="Ald_DH_CS_CYS"/>
</dbReference>
<dbReference type="InterPro" id="IPR029510">
    <property type="entry name" value="Ald_DH_CS_GLU"/>
</dbReference>
<dbReference type="InterPro" id="IPR016162">
    <property type="entry name" value="Ald_DH_N"/>
</dbReference>
<dbReference type="InterPro" id="IPR015590">
    <property type="entry name" value="Aldehyde_DH_dom"/>
</dbReference>
<dbReference type="InterPro" id="IPR011264">
    <property type="entry name" value="BADH"/>
</dbReference>
<dbReference type="NCBIfam" id="TIGR01804">
    <property type="entry name" value="BADH"/>
    <property type="match status" value="1"/>
</dbReference>
<dbReference type="NCBIfam" id="NF009725">
    <property type="entry name" value="PRK13252.1"/>
    <property type="match status" value="1"/>
</dbReference>
<dbReference type="PANTHER" id="PTHR11699">
    <property type="entry name" value="ALDEHYDE DEHYDROGENASE-RELATED"/>
    <property type="match status" value="1"/>
</dbReference>
<dbReference type="Pfam" id="PF00171">
    <property type="entry name" value="Aldedh"/>
    <property type="match status" value="1"/>
</dbReference>
<dbReference type="SUPFAM" id="SSF53720">
    <property type="entry name" value="ALDH-like"/>
    <property type="match status" value="1"/>
</dbReference>
<dbReference type="PROSITE" id="PS00070">
    <property type="entry name" value="ALDEHYDE_DEHYDR_CYS"/>
    <property type="match status" value="1"/>
</dbReference>
<dbReference type="PROSITE" id="PS00687">
    <property type="entry name" value="ALDEHYDE_DEHYDR_GLU"/>
    <property type="match status" value="1"/>
</dbReference>